<name>GSK3B_MOUSE</name>
<sequence length="420" mass="46710">MSGRPRTTSFAESCKPVQQPSAFGSMKVSRDKDGSKVTTVVATPGQGPDRPQEVSYTDTKVIGNGSFGVVYQAKLCDSGELVAIKKVLQDKRFKNRELQIMRKLDHCNIVRLRYFFYSSGEKKDEVYLNLVLDYVPETVYRVARHYSRAKQTLPVIYVKLYMYQLFRSLAYIHSFGICHRDIKPQNLLLDPDTAVLKLCDFGSAKQLVRGEPNVSYICSRYYRAPELIFGATDYTSSIDVWSAGCVLAELLLGQPIFPGDSGVDQLVEIIKVLGTPTREQIREMNPNYTEFKFPQIKAHPWTKVFRPRTPPEAIALCSRLLEYTPTARLTPLEACAHSFFDELRDPNVKLPNGRDTPALFNFTTQELSSNPPLATILIPPHARIQAAASPPANATAASDTNAGDRGQTNNAASASASNST</sequence>
<gene>
    <name evidence="30" type="primary">Gsk3b</name>
</gene>
<keyword id="KW-0002">3D-structure</keyword>
<keyword id="KW-0013">ADP-ribosylation</keyword>
<keyword id="KW-0067">ATP-binding</keyword>
<keyword id="KW-0090">Biological rhythms</keyword>
<keyword id="KW-0119">Carbohydrate metabolism</keyword>
<keyword id="KW-1003">Cell membrane</keyword>
<keyword id="KW-0963">Cytoplasm</keyword>
<keyword id="KW-0217">Developmental protein</keyword>
<keyword id="KW-0221">Differentiation</keyword>
<keyword id="KW-0321">Glycogen metabolism</keyword>
<keyword id="KW-0418">Kinase</keyword>
<keyword id="KW-0449">Lipoprotein</keyword>
<keyword id="KW-0472">Membrane</keyword>
<keyword id="KW-0524">Neurogenesis</keyword>
<keyword id="KW-0547">Nucleotide-binding</keyword>
<keyword id="KW-0539">Nucleus</keyword>
<keyword id="KW-0564">Palmitate</keyword>
<keyword id="KW-0597">Phosphoprotein</keyword>
<keyword id="KW-1185">Reference proteome</keyword>
<keyword id="KW-0723">Serine/threonine-protein kinase</keyword>
<keyword id="KW-0734">Signal transduction inhibitor</keyword>
<keyword id="KW-0808">Transferase</keyword>
<keyword id="KW-0879">Wnt signaling pathway</keyword>
<proteinExistence type="evidence at protein level"/>
<organism>
    <name type="scientific">Mus musculus</name>
    <name type="common">Mouse</name>
    <dbReference type="NCBI Taxonomy" id="10090"/>
    <lineage>
        <taxon>Eukaryota</taxon>
        <taxon>Metazoa</taxon>
        <taxon>Chordata</taxon>
        <taxon>Craniata</taxon>
        <taxon>Vertebrata</taxon>
        <taxon>Euteleostomi</taxon>
        <taxon>Mammalia</taxon>
        <taxon>Eutheria</taxon>
        <taxon>Euarchontoglires</taxon>
        <taxon>Glires</taxon>
        <taxon>Rodentia</taxon>
        <taxon>Myomorpha</taxon>
        <taxon>Muroidea</taxon>
        <taxon>Muridae</taxon>
        <taxon>Murinae</taxon>
        <taxon>Mus</taxon>
        <taxon>Mus</taxon>
    </lineage>
</organism>
<dbReference type="EC" id="2.7.11.26" evidence="2"/>
<dbReference type="EC" id="2.7.11.1" evidence="18 20 21"/>
<dbReference type="EMBL" id="AF156099">
    <property type="protein sequence ID" value="AAD39258.2"/>
    <property type="molecule type" value="mRNA"/>
</dbReference>
<dbReference type="EMBL" id="BC006936">
    <property type="protein sequence ID" value="AAH06936.1"/>
    <property type="molecule type" value="mRNA"/>
</dbReference>
<dbReference type="EMBL" id="BC060743">
    <property type="protein sequence ID" value="AAH60743.1"/>
    <property type="molecule type" value="mRNA"/>
</dbReference>
<dbReference type="CCDS" id="CCDS28163.1"/>
<dbReference type="RefSeq" id="NP_062801.1">
    <property type="nucleotide sequence ID" value="NM_019827.7"/>
</dbReference>
<dbReference type="PDB" id="4NU1">
    <property type="method" value="X-ray"/>
    <property type="resolution" value="2.50 A"/>
    <property type="chains" value="A=1-383"/>
</dbReference>
<dbReference type="PDB" id="5AIR">
    <property type="method" value="X-ray"/>
    <property type="resolution" value="2.53 A"/>
    <property type="chains" value="A/B=4-420"/>
</dbReference>
<dbReference type="PDB" id="6AE3">
    <property type="method" value="X-ray"/>
    <property type="resolution" value="2.14 A"/>
    <property type="chains" value="A/B/C/D=1-420"/>
</dbReference>
<dbReference type="PDB" id="8VME">
    <property type="method" value="X-ray"/>
    <property type="resolution" value="2.30 A"/>
    <property type="chains" value="A=26-383"/>
</dbReference>
<dbReference type="PDB" id="8VMF">
    <property type="method" value="X-ray"/>
    <property type="resolution" value="2.50 A"/>
    <property type="chains" value="A=26-383"/>
</dbReference>
<dbReference type="PDB" id="8VMG">
    <property type="method" value="X-ray"/>
    <property type="resolution" value="2.45 A"/>
    <property type="chains" value="A/B=26-383"/>
</dbReference>
<dbReference type="PDBsum" id="4NU1"/>
<dbReference type="PDBsum" id="5AIR"/>
<dbReference type="PDBsum" id="6AE3"/>
<dbReference type="PDBsum" id="8VME"/>
<dbReference type="PDBsum" id="8VMF"/>
<dbReference type="PDBsum" id="8VMG"/>
<dbReference type="SMR" id="Q9WV60"/>
<dbReference type="BioGRID" id="208115">
    <property type="interactions" value="108"/>
</dbReference>
<dbReference type="ComplexPortal" id="CPX-103">
    <property type="entry name" value="Beta-catenin destruction core complex, Apc-Axin1-Gsk3b variant"/>
</dbReference>
<dbReference type="ComplexPortal" id="CPX-108">
    <property type="entry name" value="Nuclear export complex Frat1-Gsk3b"/>
</dbReference>
<dbReference type="ComplexPortal" id="CPX-110">
    <property type="entry name" value="Nuclear export complex Frat2-Gsk3b"/>
</dbReference>
<dbReference type="ComplexPortal" id="CPX-448">
    <property type="entry name" value="Beta-catenin destruction core complex, Apc2-Axin1-Gsk3b variant"/>
</dbReference>
<dbReference type="ComplexPortal" id="CPX-449">
    <property type="entry name" value="Beta-catenin destruction core complex, Apc-Axin2-Gsk3b variant"/>
</dbReference>
<dbReference type="ComplexPortal" id="CPX-452">
    <property type="entry name" value="Beta-catenin destruction core complex, Apc2-Axin2-Gsk3b"/>
</dbReference>
<dbReference type="ComplexPortal" id="CPX-464">
    <property type="entry name" value="Nuclear export complex Frat3-Gsk3b"/>
</dbReference>
<dbReference type="CORUM" id="Q9WV60"/>
<dbReference type="DIP" id="DIP-32446N"/>
<dbReference type="ELM" id="Q9WV60"/>
<dbReference type="FunCoup" id="Q9WV60">
    <property type="interactions" value="3389"/>
</dbReference>
<dbReference type="IntAct" id="Q9WV60">
    <property type="interactions" value="54"/>
</dbReference>
<dbReference type="MINT" id="Q9WV60"/>
<dbReference type="STRING" id="10090.ENSMUSP00000110398"/>
<dbReference type="BindingDB" id="Q9WV60"/>
<dbReference type="ChEMBL" id="CHEMBL1075321"/>
<dbReference type="GlyGen" id="Q9WV60">
    <property type="glycosylation" value="3 sites, 1 O-linked glycan (3 sites)"/>
</dbReference>
<dbReference type="iPTMnet" id="Q9WV60"/>
<dbReference type="PhosphoSitePlus" id="Q9WV60"/>
<dbReference type="SwissPalm" id="Q9WV60"/>
<dbReference type="jPOST" id="Q9WV60"/>
<dbReference type="PaxDb" id="10090-ENSMUSP00000023507"/>
<dbReference type="ProteomicsDB" id="270899"/>
<dbReference type="Pumba" id="Q9WV60"/>
<dbReference type="Antibodypedia" id="4266">
    <property type="antibodies" value="1359 antibodies from 54 providers"/>
</dbReference>
<dbReference type="DNASU" id="56637"/>
<dbReference type="Ensembl" id="ENSMUST00000023507.13">
    <property type="protein sequence ID" value="ENSMUSP00000023507.7"/>
    <property type="gene ID" value="ENSMUSG00000022812.15"/>
</dbReference>
<dbReference type="GeneID" id="56637"/>
<dbReference type="KEGG" id="mmu:56637"/>
<dbReference type="UCSC" id="uc007zen.1">
    <property type="organism name" value="mouse"/>
</dbReference>
<dbReference type="AGR" id="MGI:1861437"/>
<dbReference type="CTD" id="2932"/>
<dbReference type="MGI" id="MGI:1861437">
    <property type="gene designation" value="Gsk3b"/>
</dbReference>
<dbReference type="VEuPathDB" id="HostDB:ENSMUSG00000022812"/>
<dbReference type="eggNOG" id="KOG0658">
    <property type="taxonomic scope" value="Eukaryota"/>
</dbReference>
<dbReference type="GeneTree" id="ENSGT00520000055635"/>
<dbReference type="HOGENOM" id="CLU_000288_181_20_1"/>
<dbReference type="InParanoid" id="Q9WV60"/>
<dbReference type="OMA" id="MKTTMPM"/>
<dbReference type="OrthoDB" id="272141at2759"/>
<dbReference type="PhylomeDB" id="Q9WV60"/>
<dbReference type="TreeFam" id="TF101104"/>
<dbReference type="BRENDA" id="2.7.11.26">
    <property type="organism ID" value="3474"/>
</dbReference>
<dbReference type="Reactome" id="R-MMU-195253">
    <property type="pathway name" value="Degradation of beta-catenin by the destruction complex"/>
</dbReference>
<dbReference type="Reactome" id="R-MMU-196299">
    <property type="pathway name" value="Beta-catenin phosphorylation cascade"/>
</dbReference>
<dbReference type="Reactome" id="R-MMU-3371453">
    <property type="pathway name" value="Regulation of HSF1-mediated heat shock response"/>
</dbReference>
<dbReference type="Reactome" id="R-MMU-399956">
    <property type="pathway name" value="CRMPs in Sema3A signaling"/>
</dbReference>
<dbReference type="Reactome" id="R-MMU-4641262">
    <property type="pathway name" value="Disassembly of the destruction complex and recruitment of AXIN to the membrane"/>
</dbReference>
<dbReference type="Reactome" id="R-MMU-5250924">
    <property type="pathway name" value="B-WICH complex positively regulates rRNA expression"/>
</dbReference>
<dbReference type="Reactome" id="R-MMU-5610785">
    <property type="pathway name" value="GLI3 is processed to GLI3R by the proteasome"/>
</dbReference>
<dbReference type="Reactome" id="R-MMU-9762114">
    <property type="pathway name" value="GSK3B and BTRC:CUL1-mediated-degradation of NFE2L2"/>
</dbReference>
<dbReference type="Reactome" id="R-MMU-9856649">
    <property type="pathway name" value="Transcriptional and post-translational regulation of MITF-M expression and activity"/>
</dbReference>
<dbReference type="BioGRID-ORCS" id="56637">
    <property type="hits" value="13 hits in 81 CRISPR screens"/>
</dbReference>
<dbReference type="CD-CODE" id="01CA17F3">
    <property type="entry name" value="Centrosome"/>
</dbReference>
<dbReference type="ChiTaRS" id="Gsk3b">
    <property type="organism name" value="mouse"/>
</dbReference>
<dbReference type="EvolutionaryTrace" id="Q9WV60"/>
<dbReference type="PRO" id="PR:Q9WV60"/>
<dbReference type="Proteomes" id="UP000000589">
    <property type="component" value="Chromosome 16"/>
</dbReference>
<dbReference type="RNAct" id="Q9WV60">
    <property type="molecule type" value="protein"/>
</dbReference>
<dbReference type="Bgee" id="ENSMUSG00000022812">
    <property type="expression patterns" value="Expressed in spermatid and 251 other cell types or tissues"/>
</dbReference>
<dbReference type="ExpressionAtlas" id="Q9WV60">
    <property type="expression patterns" value="baseline and differential"/>
</dbReference>
<dbReference type="GO" id="GO:0030877">
    <property type="term" value="C:beta-catenin destruction complex"/>
    <property type="evidence" value="ECO:0000314"/>
    <property type="project" value="MGI"/>
</dbReference>
<dbReference type="GO" id="GO:0005737">
    <property type="term" value="C:cytoplasm"/>
    <property type="evidence" value="ECO:0000250"/>
    <property type="project" value="UniProtKB"/>
</dbReference>
<dbReference type="GO" id="GO:0005829">
    <property type="term" value="C:cytosol"/>
    <property type="evidence" value="ECO:0000314"/>
    <property type="project" value="MGI"/>
</dbReference>
<dbReference type="GO" id="GO:0043198">
    <property type="term" value="C:dendritic shaft"/>
    <property type="evidence" value="ECO:0000314"/>
    <property type="project" value="MGI"/>
</dbReference>
<dbReference type="GO" id="GO:0098978">
    <property type="term" value="C:glutamatergic synapse"/>
    <property type="evidence" value="ECO:0000314"/>
    <property type="project" value="SynGO"/>
</dbReference>
<dbReference type="GO" id="GO:0030426">
    <property type="term" value="C:growth cone"/>
    <property type="evidence" value="ECO:0000314"/>
    <property type="project" value="MGI"/>
</dbReference>
<dbReference type="GO" id="GO:0072687">
    <property type="term" value="C:meiotic spindle"/>
    <property type="evidence" value="ECO:0000314"/>
    <property type="project" value="MGI"/>
</dbReference>
<dbReference type="GO" id="GO:0016020">
    <property type="term" value="C:membrane"/>
    <property type="evidence" value="ECO:0000250"/>
    <property type="project" value="UniProtKB"/>
</dbReference>
<dbReference type="GO" id="GO:0005739">
    <property type="term" value="C:mitochondrion"/>
    <property type="evidence" value="ECO:0007669"/>
    <property type="project" value="GOC"/>
</dbReference>
<dbReference type="GO" id="GO:0043025">
    <property type="term" value="C:neuronal cell body"/>
    <property type="evidence" value="ECO:0000314"/>
    <property type="project" value="MGI"/>
</dbReference>
<dbReference type="GO" id="GO:0005654">
    <property type="term" value="C:nucleoplasm"/>
    <property type="evidence" value="ECO:0000304"/>
    <property type="project" value="Reactome"/>
</dbReference>
<dbReference type="GO" id="GO:0005634">
    <property type="term" value="C:nucleus"/>
    <property type="evidence" value="ECO:0000314"/>
    <property type="project" value="MGI"/>
</dbReference>
<dbReference type="GO" id="GO:0048471">
    <property type="term" value="C:perinuclear region of cytoplasm"/>
    <property type="evidence" value="ECO:0000314"/>
    <property type="project" value="BHF-UCL"/>
</dbReference>
<dbReference type="GO" id="GO:0005886">
    <property type="term" value="C:plasma membrane"/>
    <property type="evidence" value="ECO:0000250"/>
    <property type="project" value="UniProtKB"/>
</dbReference>
<dbReference type="GO" id="GO:0014069">
    <property type="term" value="C:postsynaptic density"/>
    <property type="evidence" value="ECO:0000314"/>
    <property type="project" value="MGI"/>
</dbReference>
<dbReference type="GO" id="GO:1990904">
    <property type="term" value="C:ribonucleoprotein complex"/>
    <property type="evidence" value="ECO:0000314"/>
    <property type="project" value="MGI"/>
</dbReference>
<dbReference type="GO" id="GO:1990909">
    <property type="term" value="C:Wnt signalosome"/>
    <property type="evidence" value="ECO:0000314"/>
    <property type="project" value="ParkinsonsUK-UCL"/>
</dbReference>
<dbReference type="GO" id="GO:0005524">
    <property type="term" value="F:ATP binding"/>
    <property type="evidence" value="ECO:0007669"/>
    <property type="project" value="UniProtKB-KW"/>
</dbReference>
<dbReference type="GO" id="GO:0008013">
    <property type="term" value="F:beta-catenin binding"/>
    <property type="evidence" value="ECO:0000353"/>
    <property type="project" value="MGI"/>
</dbReference>
<dbReference type="GO" id="GO:0070840">
    <property type="term" value="F:dynein complex binding"/>
    <property type="evidence" value="ECO:0000353"/>
    <property type="project" value="CAFA"/>
</dbReference>
<dbReference type="GO" id="GO:0016301">
    <property type="term" value="F:kinase activity"/>
    <property type="evidence" value="ECO:0000250"/>
    <property type="project" value="UniProtKB"/>
</dbReference>
<dbReference type="GO" id="GO:0002039">
    <property type="term" value="F:p53 binding"/>
    <property type="evidence" value="ECO:0000266"/>
    <property type="project" value="MGI"/>
</dbReference>
<dbReference type="GO" id="GO:0004672">
    <property type="term" value="F:protein kinase activity"/>
    <property type="evidence" value="ECO:0000314"/>
    <property type="project" value="UniProtKB"/>
</dbReference>
<dbReference type="GO" id="GO:0019901">
    <property type="term" value="F:protein kinase binding"/>
    <property type="evidence" value="ECO:0000353"/>
    <property type="project" value="ParkinsonsUK-UCL"/>
</dbReference>
<dbReference type="GO" id="GO:0106310">
    <property type="term" value="F:protein serine kinase activity"/>
    <property type="evidence" value="ECO:0000315"/>
    <property type="project" value="ARUK-UCL"/>
</dbReference>
<dbReference type="GO" id="GO:0004674">
    <property type="term" value="F:protein serine/threonine kinase activity"/>
    <property type="evidence" value="ECO:0000314"/>
    <property type="project" value="UniProtKB"/>
</dbReference>
<dbReference type="GO" id="GO:0050321">
    <property type="term" value="F:tau-protein kinase activity"/>
    <property type="evidence" value="ECO:0000314"/>
    <property type="project" value="MGI"/>
</dbReference>
<dbReference type="GO" id="GO:0009887">
    <property type="term" value="P:animal organ morphogenesis"/>
    <property type="evidence" value="ECO:0000315"/>
    <property type="project" value="MGI"/>
</dbReference>
<dbReference type="GO" id="GO:0141068">
    <property type="term" value="P:autosome genomic imprinting"/>
    <property type="evidence" value="ECO:0000315"/>
    <property type="project" value="BHF-UCL"/>
</dbReference>
<dbReference type="GO" id="GO:0048675">
    <property type="term" value="P:axon extension"/>
    <property type="evidence" value="ECO:0000316"/>
    <property type="project" value="MGI"/>
</dbReference>
<dbReference type="GO" id="GO:0007409">
    <property type="term" value="P:axonogenesis"/>
    <property type="evidence" value="ECO:0000316"/>
    <property type="project" value="MGI"/>
</dbReference>
<dbReference type="GO" id="GO:0060070">
    <property type="term" value="P:canonical Wnt signaling pathway"/>
    <property type="evidence" value="ECO:0000314"/>
    <property type="project" value="MGI"/>
</dbReference>
<dbReference type="GO" id="GO:0016477">
    <property type="term" value="P:cell migration"/>
    <property type="evidence" value="ECO:0000316"/>
    <property type="project" value="MGI"/>
</dbReference>
<dbReference type="GO" id="GO:0071385">
    <property type="term" value="P:cellular response to glucocorticoid stimulus"/>
    <property type="evidence" value="ECO:0000316"/>
    <property type="project" value="ARUK-UCL"/>
</dbReference>
<dbReference type="GO" id="GO:0035729">
    <property type="term" value="P:cellular response to hepatocyte growth factor stimulus"/>
    <property type="evidence" value="ECO:0000314"/>
    <property type="project" value="MGI"/>
</dbReference>
<dbReference type="GO" id="GO:0036016">
    <property type="term" value="P:cellular response to interleukin-3"/>
    <property type="evidence" value="ECO:0000314"/>
    <property type="project" value="UniProtKB"/>
</dbReference>
<dbReference type="GO" id="GO:0007623">
    <property type="term" value="P:circadian rhythm"/>
    <property type="evidence" value="ECO:0000315"/>
    <property type="project" value="UniProtKB"/>
</dbReference>
<dbReference type="GO" id="GO:0007010">
    <property type="term" value="P:cytoskeleton organization"/>
    <property type="evidence" value="ECO:0000304"/>
    <property type="project" value="UniProtKB"/>
</dbReference>
<dbReference type="GO" id="GO:0001837">
    <property type="term" value="P:epithelial to mesenchymal transition"/>
    <property type="evidence" value="ECO:0000250"/>
    <property type="project" value="UniProtKB"/>
</dbReference>
<dbReference type="GO" id="GO:0006983">
    <property type="term" value="P:ER overload response"/>
    <property type="evidence" value="ECO:0000314"/>
    <property type="project" value="MGI"/>
</dbReference>
<dbReference type="GO" id="GO:0097191">
    <property type="term" value="P:extrinsic apoptotic signaling pathway"/>
    <property type="evidence" value="ECO:0000316"/>
    <property type="project" value="ARUK-UCL"/>
</dbReference>
<dbReference type="GO" id="GO:0097192">
    <property type="term" value="P:extrinsic apoptotic signaling pathway in absence of ligand"/>
    <property type="evidence" value="ECO:0000314"/>
    <property type="project" value="UniProtKB"/>
</dbReference>
<dbReference type="GO" id="GO:0045444">
    <property type="term" value="P:fat cell differentiation"/>
    <property type="evidence" value="ECO:0000314"/>
    <property type="project" value="MGI"/>
</dbReference>
<dbReference type="GO" id="GO:0005977">
    <property type="term" value="P:glycogen metabolic process"/>
    <property type="evidence" value="ECO:0007669"/>
    <property type="project" value="UniProtKB-KW"/>
</dbReference>
<dbReference type="GO" id="GO:0008286">
    <property type="term" value="P:insulin receptor signaling pathway"/>
    <property type="evidence" value="ECO:0000314"/>
    <property type="project" value="CAFA"/>
</dbReference>
<dbReference type="GO" id="GO:0035556">
    <property type="term" value="P:intracellular signal transduction"/>
    <property type="evidence" value="ECO:0000266"/>
    <property type="project" value="MGI"/>
</dbReference>
<dbReference type="GO" id="GO:0070059">
    <property type="term" value="P:intrinsic apoptotic signaling pathway in response to endoplasmic reticulum stress"/>
    <property type="evidence" value="ECO:0000314"/>
    <property type="project" value="CACAO"/>
</dbReference>
<dbReference type="GO" id="GO:0031663">
    <property type="term" value="P:lipopolysaccharide-mediated signaling pathway"/>
    <property type="evidence" value="ECO:0000315"/>
    <property type="project" value="ARUK-UCL"/>
</dbReference>
<dbReference type="GO" id="GO:0007127">
    <property type="term" value="P:meiosis I"/>
    <property type="evidence" value="ECO:0000315"/>
    <property type="project" value="MGI"/>
</dbReference>
<dbReference type="GO" id="GO:0007520">
    <property type="term" value="P:myoblast fusion"/>
    <property type="evidence" value="ECO:0000314"/>
    <property type="project" value="MGI"/>
</dbReference>
<dbReference type="GO" id="GO:0014902">
    <property type="term" value="P:myotube differentiation"/>
    <property type="evidence" value="ECO:0000316"/>
    <property type="project" value="MGI"/>
</dbReference>
<dbReference type="GO" id="GO:0043066">
    <property type="term" value="P:negative regulation of apoptotic process"/>
    <property type="evidence" value="ECO:0000315"/>
    <property type="project" value="MGI"/>
</dbReference>
<dbReference type="GO" id="GO:0070885">
    <property type="term" value="P:negative regulation of calcineurin-NFAT signaling cascade"/>
    <property type="evidence" value="ECO:0000250"/>
    <property type="project" value="UniProtKB"/>
</dbReference>
<dbReference type="GO" id="GO:0090090">
    <property type="term" value="P:negative regulation of canonical Wnt signaling pathway"/>
    <property type="evidence" value="ECO:0000315"/>
    <property type="project" value="BHF-UCL"/>
</dbReference>
<dbReference type="GO" id="GO:0010614">
    <property type="term" value="P:negative regulation of cardiac muscle hypertrophy"/>
    <property type="evidence" value="ECO:0000314"/>
    <property type="project" value="MGI"/>
</dbReference>
<dbReference type="GO" id="GO:0010719">
    <property type="term" value="P:negative regulation of epithelial to mesenchymal transition"/>
    <property type="evidence" value="ECO:0000250"/>
    <property type="project" value="UniProtKB"/>
</dbReference>
<dbReference type="GO" id="GO:1902042">
    <property type="term" value="P:negative regulation of extrinsic apoptotic signaling pathway via death domain receptors"/>
    <property type="evidence" value="ECO:0000250"/>
    <property type="project" value="UniProtKB"/>
</dbReference>
<dbReference type="GO" id="GO:0045719">
    <property type="term" value="P:negative regulation of glycogen biosynthetic process"/>
    <property type="evidence" value="ECO:0000315"/>
    <property type="project" value="FlyBase"/>
</dbReference>
<dbReference type="GO" id="GO:0014043">
    <property type="term" value="P:negative regulation of neuron maturation"/>
    <property type="evidence" value="ECO:0000316"/>
    <property type="project" value="MGI"/>
</dbReference>
<dbReference type="GO" id="GO:0010977">
    <property type="term" value="P:negative regulation of neuron projection development"/>
    <property type="evidence" value="ECO:0000315"/>
    <property type="project" value="MGI"/>
</dbReference>
<dbReference type="GO" id="GO:1904780">
    <property type="term" value="P:negative regulation of protein localization to centrosome"/>
    <property type="evidence" value="ECO:0000315"/>
    <property type="project" value="CAFA"/>
</dbReference>
<dbReference type="GO" id="GO:0032007">
    <property type="term" value="P:negative regulation of TOR signaling"/>
    <property type="evidence" value="ECO:0000316"/>
    <property type="project" value="BHF-UCL"/>
</dbReference>
<dbReference type="GO" id="GO:1903940">
    <property type="term" value="P:negative regulation of TORC2 signaling"/>
    <property type="evidence" value="ECO:0000250"/>
    <property type="project" value="UniProtKB"/>
</dbReference>
<dbReference type="GO" id="GO:0031175">
    <property type="term" value="P:neuron projection development"/>
    <property type="evidence" value="ECO:0000250"/>
    <property type="project" value="UniProtKB"/>
</dbReference>
<dbReference type="GO" id="GO:0018105">
    <property type="term" value="P:peptidyl-serine phosphorylation"/>
    <property type="evidence" value="ECO:0000314"/>
    <property type="project" value="UniProtKB"/>
</dbReference>
<dbReference type="GO" id="GO:0043491">
    <property type="term" value="P:phosphatidylinositol 3-kinase/protein kinase B signal transduction"/>
    <property type="evidence" value="ECO:0000315"/>
    <property type="project" value="MGI"/>
</dbReference>
<dbReference type="GO" id="GO:0016310">
    <property type="term" value="P:phosphorylation"/>
    <property type="evidence" value="ECO:0000315"/>
    <property type="project" value="UniProtKB"/>
</dbReference>
<dbReference type="GO" id="GO:0010508">
    <property type="term" value="P:positive regulation of autophagy"/>
    <property type="evidence" value="ECO:0000314"/>
    <property type="project" value="UniProtKB"/>
</dbReference>
<dbReference type="GO" id="GO:0045773">
    <property type="term" value="P:positive regulation of axon extension"/>
    <property type="evidence" value="ECO:0000316"/>
    <property type="project" value="MGI"/>
</dbReference>
<dbReference type="GO" id="GO:2000727">
    <property type="term" value="P:positive regulation of cardiac muscle cell differentiation"/>
    <property type="evidence" value="ECO:0000315"/>
    <property type="project" value="BHF-UCL"/>
</dbReference>
<dbReference type="GO" id="GO:0045724">
    <property type="term" value="P:positive regulation of cilium assembly"/>
    <property type="evidence" value="ECO:0000315"/>
    <property type="project" value="UniProtKB"/>
</dbReference>
<dbReference type="GO" id="GO:0010628">
    <property type="term" value="P:positive regulation of gene expression"/>
    <property type="evidence" value="ECO:0000315"/>
    <property type="project" value="BHF-UCL"/>
</dbReference>
<dbReference type="GO" id="GO:1901030">
    <property type="term" value="P:positive regulation of mitochondrial outer membrane permeabilization involved in apoptotic signaling pathway"/>
    <property type="evidence" value="ECO:0000314"/>
    <property type="project" value="UniProtKB"/>
</dbReference>
<dbReference type="GO" id="GO:0032436">
    <property type="term" value="P:positive regulation of proteasomal ubiquitin-dependent protein catabolic process"/>
    <property type="evidence" value="ECO:0000316"/>
    <property type="project" value="MGI"/>
</dbReference>
<dbReference type="GO" id="GO:0046827">
    <property type="term" value="P:positive regulation of protein export from nucleus"/>
    <property type="evidence" value="ECO:0000266"/>
    <property type="project" value="MGI"/>
</dbReference>
<dbReference type="GO" id="GO:1903566">
    <property type="term" value="P:positive regulation of protein localization to cilium"/>
    <property type="evidence" value="ECO:0000315"/>
    <property type="project" value="UniProtKB"/>
</dbReference>
<dbReference type="GO" id="GO:2000738">
    <property type="term" value="P:positive regulation of stem cell differentiation"/>
    <property type="evidence" value="ECO:0000315"/>
    <property type="project" value="MGI"/>
</dbReference>
<dbReference type="GO" id="GO:1900026">
    <property type="term" value="P:positive regulation of substrate adhesion-dependent cell spreading"/>
    <property type="evidence" value="ECO:0000315"/>
    <property type="project" value="ARUK-UCL"/>
</dbReference>
<dbReference type="GO" id="GO:0045944">
    <property type="term" value="P:positive regulation of transcription by RNA polymerase II"/>
    <property type="evidence" value="ECO:0000315"/>
    <property type="project" value="BHF-UCL"/>
</dbReference>
<dbReference type="GO" id="GO:0043161">
    <property type="term" value="P:proteasome-mediated ubiquitin-dependent protein catabolic process"/>
    <property type="evidence" value="ECO:0000303"/>
    <property type="project" value="ComplexPortal"/>
</dbReference>
<dbReference type="GO" id="GO:0006611">
    <property type="term" value="P:protein export from nucleus"/>
    <property type="evidence" value="ECO:0000314"/>
    <property type="project" value="MGI"/>
</dbReference>
<dbReference type="GO" id="GO:0035372">
    <property type="term" value="P:protein localization to microtubule"/>
    <property type="evidence" value="ECO:0000316"/>
    <property type="project" value="MGI"/>
</dbReference>
<dbReference type="GO" id="GO:0006468">
    <property type="term" value="P:protein phosphorylation"/>
    <property type="evidence" value="ECO:0000315"/>
    <property type="project" value="UniProtKB"/>
</dbReference>
<dbReference type="GO" id="GO:0000320">
    <property type="term" value="P:re-entry into mitotic cell cycle"/>
    <property type="evidence" value="ECO:0000314"/>
    <property type="project" value="MGI"/>
</dbReference>
<dbReference type="GO" id="GO:0042981">
    <property type="term" value="P:regulation of apoptotic process"/>
    <property type="evidence" value="ECO:0000315"/>
    <property type="project" value="BHF-UCL"/>
</dbReference>
<dbReference type="GO" id="GO:0001558">
    <property type="term" value="P:regulation of cell growth"/>
    <property type="evidence" value="ECO:0000315"/>
    <property type="project" value="MGI"/>
</dbReference>
<dbReference type="GO" id="GO:0042752">
    <property type="term" value="P:regulation of circadian rhythm"/>
    <property type="evidence" value="ECO:0000315"/>
    <property type="project" value="UniProtKB"/>
</dbReference>
<dbReference type="GO" id="GO:1900271">
    <property type="term" value="P:regulation of long-term synaptic potentiation"/>
    <property type="evidence" value="ECO:0000315"/>
    <property type="project" value="UniProtKB"/>
</dbReference>
<dbReference type="GO" id="GO:0032886">
    <property type="term" value="P:regulation of microtubule-based process"/>
    <property type="evidence" value="ECO:0000314"/>
    <property type="project" value="UniProtKB"/>
</dbReference>
<dbReference type="GO" id="GO:0010975">
    <property type="term" value="P:regulation of neuron projection development"/>
    <property type="evidence" value="ECO:0000316"/>
    <property type="project" value="MGI"/>
</dbReference>
<dbReference type="GO" id="GO:0046825">
    <property type="term" value="P:regulation of protein export from nucleus"/>
    <property type="evidence" value="ECO:0000266"/>
    <property type="project" value="ComplexPortal"/>
</dbReference>
<dbReference type="GO" id="GO:0048863">
    <property type="term" value="P:stem cell differentiation"/>
    <property type="evidence" value="ECO:0000315"/>
    <property type="project" value="MGI"/>
</dbReference>
<dbReference type="GO" id="GO:0006366">
    <property type="term" value="P:transcription by RNA polymerase II"/>
    <property type="evidence" value="ECO:0000315"/>
    <property type="project" value="MGI"/>
</dbReference>
<dbReference type="GO" id="GO:0016055">
    <property type="term" value="P:Wnt signaling pathway"/>
    <property type="evidence" value="ECO:0000316"/>
    <property type="project" value="MGI"/>
</dbReference>
<dbReference type="CDD" id="cd14137">
    <property type="entry name" value="STKc_GSK3"/>
    <property type="match status" value="1"/>
</dbReference>
<dbReference type="FunFam" id="1.10.510.10:FF:000055">
    <property type="entry name" value="Glycogen synthase kinase-3 beta"/>
    <property type="match status" value="1"/>
</dbReference>
<dbReference type="FunFam" id="3.30.200.20:FF:000009">
    <property type="entry name" value="Glycogen synthase kinase-3 beta"/>
    <property type="match status" value="1"/>
</dbReference>
<dbReference type="Gene3D" id="3.30.200.20">
    <property type="entry name" value="Phosphorylase Kinase, domain 1"/>
    <property type="match status" value="1"/>
</dbReference>
<dbReference type="Gene3D" id="1.10.510.10">
    <property type="entry name" value="Transferase(Phosphotransferase) domain 1"/>
    <property type="match status" value="1"/>
</dbReference>
<dbReference type="IDEAL" id="IID50236"/>
<dbReference type="InterPro" id="IPR050591">
    <property type="entry name" value="GSK-3"/>
</dbReference>
<dbReference type="InterPro" id="IPR011009">
    <property type="entry name" value="Kinase-like_dom_sf"/>
</dbReference>
<dbReference type="InterPro" id="IPR000719">
    <property type="entry name" value="Prot_kinase_dom"/>
</dbReference>
<dbReference type="InterPro" id="IPR017441">
    <property type="entry name" value="Protein_kinase_ATP_BS"/>
</dbReference>
<dbReference type="InterPro" id="IPR008271">
    <property type="entry name" value="Ser/Thr_kinase_AS"/>
</dbReference>
<dbReference type="InterPro" id="IPR039192">
    <property type="entry name" value="STKc_GSK3"/>
</dbReference>
<dbReference type="PANTHER" id="PTHR24057">
    <property type="entry name" value="GLYCOGEN SYNTHASE KINASE-3 ALPHA"/>
    <property type="match status" value="1"/>
</dbReference>
<dbReference type="PANTHER" id="PTHR24057:SF8">
    <property type="entry name" value="GLYCOGEN SYNTHASE KINASE-3 BETA"/>
    <property type="match status" value="1"/>
</dbReference>
<dbReference type="Pfam" id="PF00069">
    <property type="entry name" value="Pkinase"/>
    <property type="match status" value="1"/>
</dbReference>
<dbReference type="SMART" id="SM00220">
    <property type="entry name" value="S_TKc"/>
    <property type="match status" value="1"/>
</dbReference>
<dbReference type="SUPFAM" id="SSF56112">
    <property type="entry name" value="Protein kinase-like (PK-like)"/>
    <property type="match status" value="1"/>
</dbReference>
<dbReference type="PROSITE" id="PS00107">
    <property type="entry name" value="PROTEIN_KINASE_ATP"/>
    <property type="match status" value="1"/>
</dbReference>
<dbReference type="PROSITE" id="PS50011">
    <property type="entry name" value="PROTEIN_KINASE_DOM"/>
    <property type="match status" value="1"/>
</dbReference>
<dbReference type="PROSITE" id="PS00108">
    <property type="entry name" value="PROTEIN_KINASE_ST"/>
    <property type="match status" value="1"/>
</dbReference>
<feature type="chain" id="PRO_0000085981" description="Glycogen synthase kinase-3 beta">
    <location>
        <begin position="1"/>
        <end position="420"/>
    </location>
</feature>
<feature type="domain" description="Protein kinase" evidence="3">
    <location>
        <begin position="56"/>
        <end position="340"/>
    </location>
</feature>
<feature type="region of interest" description="Disordered" evidence="5">
    <location>
        <begin position="1"/>
        <end position="53"/>
    </location>
</feature>
<feature type="region of interest" description="Disordered" evidence="5">
    <location>
        <begin position="385"/>
        <end position="420"/>
    </location>
</feature>
<feature type="compositionally biased region" description="Polar residues" evidence="5">
    <location>
        <begin position="1"/>
        <end position="22"/>
    </location>
</feature>
<feature type="compositionally biased region" description="Low complexity" evidence="5">
    <location>
        <begin position="386"/>
        <end position="401"/>
    </location>
</feature>
<feature type="compositionally biased region" description="Low complexity" evidence="5">
    <location>
        <begin position="409"/>
        <end position="420"/>
    </location>
</feature>
<feature type="active site" description="Proton acceptor" evidence="3 4">
    <location>
        <position position="181"/>
    </location>
</feature>
<feature type="binding site" evidence="3">
    <location>
        <begin position="62"/>
        <end position="70"/>
    </location>
    <ligand>
        <name>ATP</name>
        <dbReference type="ChEBI" id="CHEBI:30616"/>
    </ligand>
</feature>
<feature type="binding site" evidence="3">
    <location>
        <position position="85"/>
    </location>
    <ligand>
        <name>ATP</name>
        <dbReference type="ChEBI" id="CHEBI:30616"/>
    </ligand>
</feature>
<feature type="modified residue" description="Phosphoserine; by PKB/AKT1, RPS6KA3 and SGK3" evidence="17 19 21 23">
    <location>
        <position position="9"/>
    </location>
</feature>
<feature type="modified residue" description="Phosphotyrosine" evidence="2">
    <location>
        <position position="216"/>
    </location>
</feature>
<feature type="modified residue" description="Phosphoserine" evidence="31">
    <location>
        <position position="389"/>
    </location>
</feature>
<feature type="lipid moiety-binding region" description="S-palmitoyl cysteine" evidence="2">
    <location>
        <position position="14"/>
    </location>
</feature>
<feature type="mutagenesis site" description="Loss of phosphorylation; No inhibition of activity and constitutively active." evidence="7 17">
    <original>S</original>
    <variation>A</variation>
    <location>
        <position position="9"/>
    </location>
</feature>
<feature type="mutagenesis site" description="Inhibits interaction with AXIN1 and ZBED3." evidence="12">
    <original>K</original>
    <variation>R</variation>
    <location>
        <position position="85"/>
    </location>
</feature>
<feature type="strand" evidence="33">
    <location>
        <begin position="28"/>
        <end position="30"/>
    </location>
</feature>
<feature type="strand" evidence="32">
    <location>
        <begin position="37"/>
        <end position="47"/>
    </location>
</feature>
<feature type="strand" evidence="32">
    <location>
        <begin position="52"/>
        <end position="64"/>
    </location>
</feature>
<feature type="strand" evidence="32">
    <location>
        <begin position="66"/>
        <end position="75"/>
    </location>
</feature>
<feature type="turn" evidence="32">
    <location>
        <begin position="76"/>
        <end position="78"/>
    </location>
</feature>
<feature type="strand" evidence="32">
    <location>
        <begin position="81"/>
        <end position="88"/>
    </location>
</feature>
<feature type="turn" evidence="34">
    <location>
        <begin position="91"/>
        <end position="93"/>
    </location>
</feature>
<feature type="helix" evidence="32">
    <location>
        <begin position="96"/>
        <end position="102"/>
    </location>
</feature>
<feature type="strand" evidence="32">
    <location>
        <begin position="112"/>
        <end position="119"/>
    </location>
</feature>
<feature type="strand" evidence="33">
    <location>
        <begin position="121"/>
        <end position="124"/>
    </location>
</feature>
<feature type="strand" evidence="32">
    <location>
        <begin position="126"/>
        <end position="133"/>
    </location>
</feature>
<feature type="helix" evidence="32">
    <location>
        <begin position="139"/>
        <end position="148"/>
    </location>
</feature>
<feature type="helix" evidence="32">
    <location>
        <begin position="155"/>
        <end position="173"/>
    </location>
</feature>
<feature type="turn" evidence="32">
    <location>
        <begin position="174"/>
        <end position="176"/>
    </location>
</feature>
<feature type="helix" evidence="32">
    <location>
        <begin position="184"/>
        <end position="186"/>
    </location>
</feature>
<feature type="strand" evidence="32">
    <location>
        <begin position="187"/>
        <end position="189"/>
    </location>
</feature>
<feature type="turn" evidence="32">
    <location>
        <begin position="191"/>
        <end position="193"/>
    </location>
</feature>
<feature type="strand" evidence="32">
    <location>
        <begin position="196"/>
        <end position="198"/>
    </location>
</feature>
<feature type="helix" evidence="32">
    <location>
        <begin position="201"/>
        <end position="203"/>
    </location>
</feature>
<feature type="helix" evidence="32">
    <location>
        <begin position="220"/>
        <end position="222"/>
    </location>
</feature>
<feature type="helix" evidence="32">
    <location>
        <begin position="225"/>
        <end position="228"/>
    </location>
</feature>
<feature type="helix" evidence="32">
    <location>
        <begin position="237"/>
        <end position="252"/>
    </location>
</feature>
<feature type="turn" evidence="32">
    <location>
        <begin position="261"/>
        <end position="263"/>
    </location>
</feature>
<feature type="helix" evidence="32">
    <location>
        <begin position="264"/>
        <end position="273"/>
    </location>
</feature>
<feature type="helix" evidence="32">
    <location>
        <begin position="278"/>
        <end position="284"/>
    </location>
</feature>
<feature type="helix" evidence="33">
    <location>
        <begin position="286"/>
        <end position="288"/>
    </location>
</feature>
<feature type="helix" evidence="32">
    <location>
        <begin position="301"/>
        <end position="304"/>
    </location>
</feature>
<feature type="helix" evidence="32">
    <location>
        <begin position="311"/>
        <end position="320"/>
    </location>
</feature>
<feature type="helix" evidence="32">
    <location>
        <begin position="325"/>
        <end position="327"/>
    </location>
</feature>
<feature type="helix" evidence="32">
    <location>
        <begin position="331"/>
        <end position="335"/>
    </location>
</feature>
<feature type="helix" evidence="32">
    <location>
        <begin position="338"/>
        <end position="344"/>
    </location>
</feature>
<feature type="helix" evidence="32">
    <location>
        <begin position="364"/>
        <end position="367"/>
    </location>
</feature>
<feature type="helix" evidence="32">
    <location>
        <begin position="371"/>
        <end position="373"/>
    </location>
</feature>
<feature type="helix" evidence="32">
    <location>
        <begin position="374"/>
        <end position="377"/>
    </location>
</feature>
<feature type="helix" evidence="32">
    <location>
        <begin position="380"/>
        <end position="382"/>
    </location>
</feature>
<evidence type="ECO:0000250" key="1">
    <source>
        <dbReference type="UniProtKB" id="P18266"/>
    </source>
</evidence>
<evidence type="ECO:0000250" key="2">
    <source>
        <dbReference type="UniProtKB" id="P49841"/>
    </source>
</evidence>
<evidence type="ECO:0000255" key="3">
    <source>
        <dbReference type="PROSITE-ProRule" id="PRU00159"/>
    </source>
</evidence>
<evidence type="ECO:0000255" key="4">
    <source>
        <dbReference type="PROSITE-ProRule" id="PRU10027"/>
    </source>
</evidence>
<evidence type="ECO:0000256" key="5">
    <source>
        <dbReference type="SAM" id="MobiDB-lite"/>
    </source>
</evidence>
<evidence type="ECO:0000269" key="6">
    <source>
    </source>
</evidence>
<evidence type="ECO:0000269" key="7">
    <source>
    </source>
</evidence>
<evidence type="ECO:0000269" key="8">
    <source>
    </source>
</evidence>
<evidence type="ECO:0000269" key="9">
    <source>
    </source>
</evidence>
<evidence type="ECO:0000269" key="10">
    <source>
    </source>
</evidence>
<evidence type="ECO:0000269" key="11">
    <source>
    </source>
</evidence>
<evidence type="ECO:0000269" key="12">
    <source>
    </source>
</evidence>
<evidence type="ECO:0000269" key="13">
    <source>
    </source>
</evidence>
<evidence type="ECO:0000269" key="14">
    <source>
    </source>
</evidence>
<evidence type="ECO:0000269" key="15">
    <source>
    </source>
</evidence>
<evidence type="ECO:0000269" key="16">
    <source>
    </source>
</evidence>
<evidence type="ECO:0000269" key="17">
    <source>
    </source>
</evidence>
<evidence type="ECO:0000269" key="18">
    <source>
    </source>
</evidence>
<evidence type="ECO:0000269" key="19">
    <source>
    </source>
</evidence>
<evidence type="ECO:0000269" key="20">
    <source>
    </source>
</evidence>
<evidence type="ECO:0000269" key="21">
    <source>
    </source>
</evidence>
<evidence type="ECO:0000269" key="22">
    <source>
    </source>
</evidence>
<evidence type="ECO:0000269" key="23">
    <source>
    </source>
</evidence>
<evidence type="ECO:0000269" key="24">
    <source>
    </source>
</evidence>
<evidence type="ECO:0000269" key="25">
    <source>
    </source>
</evidence>
<evidence type="ECO:0000269" key="26">
    <source>
    </source>
</evidence>
<evidence type="ECO:0000269" key="27">
    <source>
    </source>
</evidence>
<evidence type="ECO:0000269" key="28">
    <source>
    </source>
</evidence>
<evidence type="ECO:0000305" key="29"/>
<evidence type="ECO:0000312" key="30">
    <source>
        <dbReference type="MGI" id="MGI:1861437"/>
    </source>
</evidence>
<evidence type="ECO:0007744" key="31">
    <source>
    </source>
</evidence>
<evidence type="ECO:0007829" key="32">
    <source>
        <dbReference type="PDB" id="6AE3"/>
    </source>
</evidence>
<evidence type="ECO:0007829" key="33">
    <source>
        <dbReference type="PDB" id="8VME"/>
    </source>
</evidence>
<evidence type="ECO:0007829" key="34">
    <source>
        <dbReference type="PDB" id="8VMG"/>
    </source>
</evidence>
<protein>
    <recommendedName>
        <fullName>Glycogen synthase kinase-3 beta</fullName>
        <shortName>GSK-3 beta</shortName>
        <ecNumber evidence="2">2.7.11.26</ecNumber>
    </recommendedName>
    <alternativeName>
        <fullName>Serine/threonine-protein kinase GSK3B</fullName>
        <ecNumber evidence="18 20 21">2.7.11.1</ecNumber>
    </alternativeName>
</protein>
<accession>Q9WV60</accession>
<reference key="1">
    <citation type="submission" date="2000-02" db="EMBL/GenBank/DDBJ databases">
        <title>Testicular expression and hormonal control of glycogen synthase kinase 3, a homologue of yeast RIM11.</title>
        <authorList>
            <person name="Salameh W.A."/>
            <person name="Guo T.B."/>
            <person name="Chan K.C."/>
            <person name="Mitchell A.P."/>
        </authorList>
    </citation>
    <scope>NUCLEOTIDE SEQUENCE [MRNA]</scope>
    <source>
        <tissue>Testis</tissue>
    </source>
</reference>
<reference key="2">
    <citation type="journal article" date="2004" name="Genome Res.">
        <title>The status, quality, and expansion of the NIH full-length cDNA project: the Mammalian Gene Collection (MGC).</title>
        <authorList>
            <consortium name="The MGC Project Team"/>
        </authorList>
    </citation>
    <scope>NUCLEOTIDE SEQUENCE [LARGE SCALE MRNA]</scope>
    <source>
        <strain>Czech II</strain>
        <strain>FVB/N</strain>
        <tissue>Mammary gland</tissue>
    </source>
</reference>
<reference key="3">
    <citation type="journal article" date="2000" name="Nature">
        <title>Requirement for glycogen synthase kinase-3beta in cell survival and NF-kappaB activation.</title>
        <authorList>
            <person name="Hoeflich K.P."/>
            <person name="Luo J."/>
            <person name="Rubie E.A."/>
            <person name="Tsao M.S."/>
            <person name="Jin O."/>
            <person name="Woodgett J.R."/>
        </authorList>
    </citation>
    <scope>FUNCTION</scope>
    <scope>DISRUPTION PHENOTYPE</scope>
</reference>
<reference key="4">
    <citation type="journal article" date="2004" name="Mol. Cell. Proteomics">
        <title>Phosphoproteomic analysis of the developing mouse brain.</title>
        <authorList>
            <person name="Ballif B.A."/>
            <person name="Villen J."/>
            <person name="Beausoleil S.A."/>
            <person name="Schwartz D."/>
            <person name="Gygi S.P."/>
        </authorList>
    </citation>
    <scope>PHOSPHORYLATION [LARGE SCALE ANALYSIS] AT SER-389</scope>
    <scope>IDENTIFICATION BY MASS SPECTROMETRY [LARGE SCALE ANALYSIS]</scope>
    <source>
        <tissue>Embryonic brain</tissue>
    </source>
</reference>
<reference key="5">
    <citation type="journal article" date="2005" name="Cell">
        <title>An Akt/beta-arrestin 2/PP2A signaling complex mediates dopaminergic neurotransmission and behavior.</title>
        <authorList>
            <person name="Beaulieu J.-M."/>
            <person name="Sotnikova T.D."/>
            <person name="Marion S."/>
            <person name="Lefkowitz R.J."/>
            <person name="Gainetdinov R.R."/>
            <person name="Caron M.G."/>
        </authorList>
    </citation>
    <scope>INTERACTION WITH ARRB2</scope>
</reference>
<reference key="6">
    <citation type="journal article" date="2005" name="EMBO J.">
        <title>Role that phosphorylation of GSK3 plays in insulin and Wnt signalling defined by knockin analysis.</title>
        <authorList>
            <person name="McManus E.J."/>
            <person name="Sakamoto K."/>
            <person name="Armit L.J."/>
            <person name="Ronaldson L."/>
            <person name="Shpiro N."/>
            <person name="Marquez R."/>
            <person name="Alessi D.R."/>
        </authorList>
    </citation>
    <scope>FUNCTION</scope>
    <scope>MUTAGENESIS OF SER-9</scope>
</reference>
<reference key="7">
    <citation type="journal article" date="2006" name="Mol. Cell">
        <title>Glycogen synthase kinase-3 regulates mitochondrial outer membrane permeabilization and apoptosis by destabilization of MCL-1.</title>
        <authorList>
            <person name="Maurer U."/>
            <person name="Charvet C."/>
            <person name="Wagman A.S."/>
            <person name="Dejardin E."/>
            <person name="Green D.R."/>
        </authorList>
    </citation>
    <scope>FUNCTION IN MCL1 PHOSPHORYLATION</scope>
</reference>
<reference key="8">
    <citation type="journal article" date="2007" name="FEBS Lett.">
        <title>GSK3 alpha and GSK3 beta are necessary for axon formation.</title>
        <authorList>
            <person name="Garrido J.J."/>
            <person name="Simon D."/>
            <person name="Varea O."/>
            <person name="Wandosell F."/>
        </authorList>
    </citation>
    <scope>FUNCTION IN AXON FORMATION</scope>
</reference>
<reference key="9">
    <citation type="journal article" date="2007" name="Proc. Natl. Acad. Sci. U.S.A.">
        <title>Large-scale phosphorylation analysis of mouse liver.</title>
        <authorList>
            <person name="Villen J."/>
            <person name="Beausoleil S.A."/>
            <person name="Gerber S.A."/>
            <person name="Gygi S.P."/>
        </authorList>
    </citation>
    <scope>IDENTIFICATION BY MASS SPECTROMETRY [LARGE SCALE ANALYSIS]</scope>
    <source>
        <tissue>Liver</tissue>
    </source>
</reference>
<reference key="10">
    <citation type="journal article" date="2008" name="PLoS Biol.">
        <title>Genetic deficiency of glycogen synthase kinase-3beta corrects diabetes in mouse models of insulin resistance.</title>
        <authorList>
            <person name="Tanabe K."/>
            <person name="Liu Z."/>
            <person name="Patel S."/>
            <person name="Doble B.W."/>
            <person name="Li L."/>
            <person name="Cras-Meneur C."/>
            <person name="Martinez S.C."/>
            <person name="Welling C.M."/>
            <person name="White M.F."/>
            <person name="Bernal-Mizrachi E."/>
            <person name="Woodgett J.R."/>
            <person name="Permutt M.A."/>
        </authorList>
    </citation>
    <scope>FUNCTION IN REGULATION OF PANCREATIC BETA-CELLS</scope>
</reference>
<reference key="11">
    <citation type="journal article" date="2009" name="Cell">
        <title>Disrupted in schizophrenia 1 regulates neuronal progenitor proliferation via modulation of GSK3beta/beta-catenin signaling.</title>
        <authorList>
            <person name="Mao Y."/>
            <person name="Ge X."/>
            <person name="Frank C.L."/>
            <person name="Madison J.M."/>
            <person name="Koehler A.N."/>
            <person name="Doud M.K."/>
            <person name="Tassa C."/>
            <person name="Berry E.M."/>
            <person name="Soda T."/>
            <person name="Singh K.K."/>
            <person name="Biechele T."/>
            <person name="Petryshen T.L."/>
            <person name="Moon R.T."/>
            <person name="Haggarty S.J."/>
            <person name="Tsai L.H."/>
        </authorList>
    </citation>
    <scope>INTERACTION WITH DISC1</scope>
</reference>
<reference key="12">
    <citation type="journal article" date="2009" name="J. Biol. Chem.">
        <title>Identification of zinc-finger BED domain-containing 3 (Zbed3) as a novel Axin-interacting protein that activates Wnt/beta-catenin signaling.</title>
        <authorList>
            <person name="Chen T."/>
            <person name="Li M."/>
            <person name="Ding Y."/>
            <person name="Zhang L.S."/>
            <person name="Xi Y."/>
            <person name="Pan W.J."/>
            <person name="Tao D.L."/>
            <person name="Wang J.Y."/>
            <person name="Li L."/>
        </authorList>
    </citation>
    <scope>INTERACTION WITH AXIN1 AND ZBED3</scope>
    <scope>MUTAGENESIS OF LYS-85</scope>
</reference>
<reference key="13">
    <citation type="journal article" date="2010" name="Cell">
        <title>A tissue-specific atlas of mouse protein phosphorylation and expression.</title>
        <authorList>
            <person name="Huttlin E.L."/>
            <person name="Jedrychowski M.P."/>
            <person name="Elias J.E."/>
            <person name="Goswami T."/>
            <person name="Rad R."/>
            <person name="Beausoleil S.A."/>
            <person name="Villen J."/>
            <person name="Haas W."/>
            <person name="Sowa M.E."/>
            <person name="Gygi S.P."/>
        </authorList>
    </citation>
    <scope>IDENTIFICATION BY MASS SPECTROMETRY [LARGE SCALE ANALYSIS]</scope>
    <source>
        <tissue>Brain</tissue>
        <tissue>Brown adipose tissue</tissue>
        <tissue>Heart</tissue>
        <tissue>Kidney</tissue>
        <tissue>Liver</tissue>
        <tissue>Lung</tissue>
        <tissue>Pancreas</tissue>
        <tissue>Spleen</tissue>
        <tissue>Testis</tissue>
    </source>
</reference>
<reference key="14">
    <citation type="journal article" date="2010" name="Mol. Cell. Biol.">
        <title>DYRK1A and glycogen synthase kinase 3beta, a dual-kinase mechanism directing proteasomal degradation of CRY2 for circadian timekeeping.</title>
        <authorList>
            <person name="Kurabayashi N."/>
            <person name="Hirota T."/>
            <person name="Sakai M."/>
            <person name="Sanada K."/>
            <person name="Fukada Y."/>
        </authorList>
    </citation>
    <scope>FUNCTION</scope>
</reference>
<reference key="15">
    <citation type="journal article" date="2010" name="PLoS ONE">
        <title>Regulation of BMAL1 protein stability and circadian function by GSK3beta-mediated phosphorylation.</title>
        <authorList>
            <person name="Sahar S."/>
            <person name="Zocchi L."/>
            <person name="Kinoshita C."/>
            <person name="Borrelli E."/>
            <person name="Sassone-Corsi P."/>
        </authorList>
    </citation>
    <scope>FUNCTION</scope>
    <scope>INTERACTION WITH BMAL1</scope>
</reference>
<reference key="16">
    <citation type="journal article" date="2011" name="Cell">
        <title>Skin stem cells orchestrate directional migration by regulating microtubule-ACF7 connections through GSK3beta.</title>
        <authorList>
            <person name="Wu X."/>
            <person name="Shen Q.T."/>
            <person name="Oristian D.S."/>
            <person name="Lu C.P."/>
            <person name="Zheng Q."/>
            <person name="Wang H.W."/>
            <person name="Fuchs E."/>
        </authorList>
    </citation>
    <scope>FUNCTION</scope>
</reference>
<reference key="17">
    <citation type="journal article" date="2011" name="Nat. Cell Biol.">
        <title>ZNRF1 promotes Wallerian degeneration by degrading AKT to induce GSK3B-dependent CRMP2 phosphorylation.</title>
        <authorList>
            <person name="Wakatsuki S."/>
            <person name="Saitoh F."/>
            <person name="Araki T."/>
        </authorList>
    </citation>
    <scope>FUNCTION IN PHOSPHORYLATION OF DPYSL2</scope>
    <scope>PHOSPHORYLATION AT SER-9</scope>
    <scope>MUTAGENESIS OF SER-9</scope>
</reference>
<reference key="18">
    <citation type="journal article" date="2012" name="Science">
        <title>GSK3-TIP60-ULK1 signaling pathway links growth factor deprivation to autophagy.</title>
        <authorList>
            <person name="Lin S.Y."/>
            <person name="Li T.Y."/>
            <person name="Liu Q."/>
            <person name="Zhang C."/>
            <person name="Li X."/>
            <person name="Chen Y."/>
            <person name="Zhang S.M."/>
            <person name="Lian G."/>
            <person name="Liu Q."/>
            <person name="Ruan K."/>
            <person name="Wang Z."/>
            <person name="Zhang C.S."/>
            <person name="Chien K.Y."/>
            <person name="Wu J."/>
            <person name="Li Q."/>
            <person name="Han J."/>
            <person name="Lin S.C."/>
        </authorList>
    </citation>
    <scope>FUNCTION</scope>
    <scope>CATALYTIC ACTIVITY</scope>
</reference>
<reference key="19">
    <citation type="journal article" date="2013" name="Cell Metab.">
        <title>Glucose sensor O-GlcNAcylation coordinates with phosphorylation to regulate circadian clock.</title>
        <authorList>
            <person name="Kaasik K."/>
            <person name="Kivimae S."/>
            <person name="Allen J.J."/>
            <person name="Chalkley R.J."/>
            <person name="Huang Y."/>
            <person name="Baer K."/>
            <person name="Kissel H."/>
            <person name="Burlingame A.L."/>
            <person name="Shokat K.M."/>
            <person name="Ptacek L.J."/>
            <person name="Fu Y.H."/>
        </authorList>
    </citation>
    <scope>FUNCTION</scope>
    <scope>PHOSPHORYLATION AT SER-9</scope>
</reference>
<reference key="20">
    <citation type="journal article" date="2013" name="Nat. Immunol.">
        <title>A combinatorial F box protein directed pathway controls TRAF adaptor stability to regulate inflammation.</title>
        <authorList>
            <person name="Chen B.B."/>
            <person name="Coon T.A."/>
            <person name="Glasser J.R."/>
            <person name="McVerry B.J."/>
            <person name="Zhao J."/>
            <person name="Zhao Y."/>
            <person name="Zou C."/>
            <person name="Ellis B."/>
            <person name="Sciurba F.C."/>
            <person name="Zhang Y."/>
            <person name="Mallampalli R.K."/>
        </authorList>
    </citation>
    <scope>FUNCTION</scope>
    <scope>CATALYTIC ACTIVITY</scope>
</reference>
<reference key="21">
    <citation type="journal article" date="2014" name="J. Biol. Chem.">
        <title>Glycogen synthase kinase-3beta stabilizes the interleukin (IL)-22 receptor from proteasomal degradation in murine lung epithelia.</title>
        <authorList>
            <person name="Weathington N.M."/>
            <person name="Snavely C.A."/>
            <person name="Chen B.B."/>
            <person name="Zhao J."/>
            <person name="Zhao Y."/>
            <person name="Mallampalli R.K."/>
        </authorList>
    </citation>
    <scope>FUNCTION</scope>
    <scope>CATALYTIC ACTIVITY</scope>
    <scope>ACTIVITY REGULATION</scope>
    <scope>PHOSPHORYLATION AT SER-9</scope>
</reference>
<reference key="22">
    <citation type="journal article" date="2015" name="Proc. Natl. Acad. Sci. U.S.A.">
        <title>FXR1P is a GSK3beta substrate regulating mood and emotion processing.</title>
        <authorList>
            <person name="Del'Guidice T."/>
            <person name="Latapy C."/>
            <person name="Rampino A."/>
            <person name="Khlghatyan J."/>
            <person name="Lemasson M."/>
            <person name="Gelao B."/>
            <person name="Quarto T."/>
            <person name="Rizzo G."/>
            <person name="Barbeau A."/>
            <person name="Lamarre C."/>
            <person name="Bertolino A."/>
            <person name="Blasi G."/>
            <person name="Beaulieu J.M."/>
        </authorList>
    </citation>
    <scope>FUNCTION IN PHOSPHORYLATION OF FXR1</scope>
</reference>
<reference key="23">
    <citation type="journal article" date="2016" name="Nat. Commun.">
        <title>Control of diabetic hyperglycaemia and insulin resistance through TSC22D4.</title>
        <authorList>
            <person name="Ekim Uestuenel B."/>
            <person name="Friedrich K."/>
            <person name="Maida A."/>
            <person name="Wang X."/>
            <person name="Krones-Herzig A."/>
            <person name="Seibert O."/>
            <person name="Sommerfeld A."/>
            <person name="Jones A."/>
            <person name="Sijmonsma T.P."/>
            <person name="Sticht C."/>
            <person name="Gretz N."/>
            <person name="Fleming T."/>
            <person name="Nawroth P.P."/>
            <person name="Stremmel W."/>
            <person name="Rose A.J."/>
            <person name="Berriel-Diaz M."/>
            <person name="Blueher M."/>
            <person name="Herzig S."/>
        </authorList>
    </citation>
    <scope>TISSUE SPECIFICITY</scope>
    <scope>PHOSPHORYLATION AT SER-9</scope>
</reference>
<reference key="24">
    <citation type="journal article" date="2017" name="Hippocampus">
        <title>GSK3 activity regulates rhythms in hippocampal clock gene expression and synaptic plasticity.</title>
        <authorList>
            <person name="Besing R.C."/>
            <person name="Rogers C.O."/>
            <person name="Paul J.R."/>
            <person name="Hablitz L.M."/>
            <person name="Johnson R.L."/>
            <person name="McMahon L.L."/>
            <person name="Gamble K.L."/>
        </authorList>
    </citation>
    <scope>FUNCTION</scope>
    <scope>PHOSPHORYLATION</scope>
</reference>
<reference key="25">
    <citation type="journal article" date="2017" name="Nat. Commun.">
        <title>Fbxo4-mediated degradation of Fxr1 suppresses tumorigenesis in head and neck squamous cell carcinoma.</title>
        <authorList>
            <person name="Qie S."/>
            <person name="Majumder M."/>
            <person name="Mackiewicz K."/>
            <person name="Howley B.V."/>
            <person name="Peterson Y.K."/>
            <person name="Howe P.H."/>
            <person name="Palanisamy V."/>
            <person name="Diehl J.A."/>
        </authorList>
    </citation>
    <scope>FUNCTION</scope>
</reference>
<reference key="26">
    <citation type="journal article" date="2017" name="Oncotarget">
        <title>Cancer/testis antigen PIWIL2 suppresses circadian rhythms by regulating the stability and activity of BMAL1 and CLOCK.</title>
        <authorList>
            <person name="Lu Y."/>
            <person name="Zheng X."/>
            <person name="Hu W."/>
            <person name="Bian S."/>
            <person name="Zhang Z."/>
            <person name="Tao D."/>
            <person name="Liu Y."/>
            <person name="Ma Y."/>
        </authorList>
    </citation>
    <scope>FUNCTION</scope>
    <scope>INTERACTION WITH BMAL1 AND PIWIL2</scope>
</reference>
<reference key="27">
    <citation type="journal article" date="2017" name="Sci. Rep.">
        <title>A ZIP6-ZIP10 heteromer controls NCAM1 phosphorylation and integration into focal adhesion complexes during epithelial-to-mesenchymal transition.</title>
        <authorList>
            <person name="Brethour D."/>
            <person name="Mehrabian M."/>
            <person name="Williams D."/>
            <person name="Wang X."/>
            <person name="Ghodrati F."/>
            <person name="Ehsani S."/>
            <person name="Rubie E.A."/>
            <person name="Woodgett J.R."/>
            <person name="Sevalle J."/>
            <person name="Xi Z."/>
            <person name="Rogaeva E."/>
            <person name="Schmitt-Ulms G."/>
        </authorList>
    </citation>
    <scope>IDENTIFICATION IN A COMPLEX WITH SLC39A6 AND SLC39A10</scope>
</reference>
<reference key="28">
    <citation type="journal article" date="2019" name="Science">
        <title>LMBR1L regulates lymphopoiesis through Wnt/beta-catenin signaling.</title>
        <authorList>
            <person name="Choi J.H."/>
            <person name="Zhong X."/>
            <person name="McAlpine W."/>
            <person name="Liao T.C."/>
            <person name="Zhang D."/>
            <person name="Fang B."/>
            <person name="Russell J."/>
            <person name="Ludwig S."/>
            <person name="Nair-Gill E."/>
            <person name="Zhang Z."/>
            <person name="Wang K.W."/>
            <person name="Misawa T."/>
            <person name="Zhan X."/>
            <person name="Choi M."/>
            <person name="Wang T."/>
            <person name="Li X."/>
            <person name="Tang M."/>
            <person name="Sun Q."/>
            <person name="Yu L."/>
            <person name="Murray A.R."/>
            <person name="Moresco E.M.Y."/>
            <person name="Beutler B."/>
        </authorList>
    </citation>
    <scope>INTERACTION WITH LMBR1L</scope>
</reference>
<comment type="function">
    <text evidence="1 2 6 7 9 10 11 14 15 16 17 18 19 20 21 22 25 26 27">Constitutively active protein kinase that acts as a negative regulator in the hormonal control of glucose homeostasis, Wnt signaling and regulation of transcription factors and microtubules, by phosphorylating and inactivating glycogen synthase (GYS1 or GYS2), EIF2B, CTNNB1/beta-catenin, APC, AXIN1, DPYSL2/CRMP2, JUN, NFATC1/NFATC, MAPT/TAU and MACF1 (PubMed:15791206, PubMed:22057101, PubMed:23395175). Requires primed phosphorylation of the majority of its substrates (PubMed:15791206, PubMed:22057101, PubMed:23395175). In skeletal muscle, contributes to insulin regulation of glycogen synthesis by phosphorylating and inhibiting GYS1 activity and hence glycogen synthesis (By similarity). May also mediate the development of insulin resistance by regulating activation of transcription factors (By similarity). Regulates protein synthesis by controlling the activity of initiation factor 2B (EIF2BE/EIF2B5) in the same manner as glycogen synthase (By similarity). In Wnt signaling, GSK3B forms a multimeric complex with APC, AXIN1 and CTNNB1/beta-catenin and phosphorylates the N-terminus of CTNNB1 leading to its degradation mediated by ubiquitin/proteasomes (By similarity). Phosphorylates JUN at sites proximal to its DNA-binding domain, thereby reducing its affinity for DNA (By similarity). Phosphorylates NFATC1/NFATC on conserved serine residues promoting NFATC1/NFATC nuclear export, shutting off NFATC1/NFATC gene regulation, and thereby opposing the action of calcineurin (By similarity). Phosphorylates MAPT/TAU on 'Thr-548', decreasing significantly MAPT/TAU ability to bind and stabilize microtubules (By similarity). MAPT/TAU is the principal component of neurofibrillary tangles in Alzheimer disease (By similarity). Plays an important role in ERBB2-dependent stabilization of microtubules at the cell cortex (By similarity). Phosphorylates MACF1, inhibiting its binding to microtubules which is critical for its role in bulge stem cell migration and skin wound repair (PubMed:21295697). Probably regulates NF-kappa-B (NFKB1) at the transcriptional level and is required for the NF-kappa-B-mediated anti-apoptotic response to TNF-alpha (TNF/TNFA) (PubMed:10894547). Negatively regulates replication in pancreatic beta-cells, resulting in apoptosis, loss of beta-cells and diabetes (PubMed:18288891). Through phosphorylation of the anti-apoptotic protein MCL1, may control cell apoptosis in response to growth factors deprivation (PubMed:16543145). Phosphorylates MUC1 in breast cancer cells, decreasing the interaction of MUC1 with CTNNB1/beta-catenin (By similarity). Is necessary for the establishment of neuronal polarity and axon outgrowth (PubMed:17391670). Phosphorylates MARK2, leading to inhibition of its activity (By similarity). Phosphorylates SIK1 at 'Thr-182', leading to sustainment of its activity (By similarity). Phosphorylates ZC3HAV1 which enhances its antiviral activity (By similarity). Phosphorylates SNAI1, leading to its ubiquitination and proteasomal degradation (By similarity). Phosphorylates SFPQ at 'Thr-687' upon T-cell activation (By similarity). Phosphorylates NR1D1 st 'Ser-55' and 'Ser-59' and stabilizes it by protecting it from proteasomal degradation (By similarity). Regulates the circadian clock via phosphorylation of the major clock components including BMAL1, CLOCK and PER2 (PubMed:20049328, PubMed:20123978, PubMed:28556462, PubMed:28903391). Phosphorylates CLOCK AT 'Ser-427' and targets it for proteasomal degradation (By similarity). Phosphorylates BMAL1 at 'Ser-17' and 'Ser-21' and primes it for ubiquitination and proteasomal degradation (PubMed:20049328, PubMed:28903391). Phosphorylates FBXL2 at 'Thr-404' and primes it for ubiquitination by the SCF(FBXO3) complex and proteasomal degradation (PubMed:23542741). Phosphorylates OGT at 'Ser-3' or 'Ser-4' which positively regulates its activity (By similarity). Phosphorylates MYCN in neuroblastoma cells which may promote its degradation (By similarity). Regulates the circadian rhythmicity of hippocampal long-term potentiation and BMAL1 and PER2 expression (PubMed:28556462). Acts as a regulator of autophagy by mediating phosphorylation of KAT5/TIP60 under starvation conditions, activating KAT5/TIP60 acetyltransferase activity and promoting acetylation of key autophagy regulators, such as ULK1 and RUBCNL/Pacer (PubMed:22539723). Negatively regulates extrinsic apoptotic signaling pathway via death domain receptors (By similarity). Promotes the formation of an anti-apoptotic complex, made of DDX3X, BRIC2 and GSK3B, at death receptors, including TNFRSF10B (By similarity). The anti-apoptotic function is most effective with weak apoptotic signals and can be overcome by stronger stimulation (By similarity). Phosphorylates E2F1, promoting the interaction between E2F1 and USP11, stabilizing E2F1 and promoting its activity (By similarity). Phosphorylates mTORC2 complex component RICTOR at 'Ser-1235' in response to endoplasmic stress, inhibiting mTORC2 (By similarity). Phosphorylates FXR1, promoting FXR1 ubiquitination by the SCF(FBXO4) complex and FXR1 degradation by the proteasome (PubMed:26240334, PubMed:29142209). Phosphorylates interleukin-22 receptor subunit IL22RA1, preventing its proteasomal degradation (PubMed:24742671).</text>
</comment>
<comment type="catalytic activity">
    <reaction evidence="2">
        <text>L-seryl-[tau protein] + ATP = O-phospho-L-seryl-[tau protein] + ADP + H(+)</text>
        <dbReference type="Rhea" id="RHEA:12801"/>
        <dbReference type="Rhea" id="RHEA-COMP:13701"/>
        <dbReference type="Rhea" id="RHEA-COMP:13702"/>
        <dbReference type="ChEBI" id="CHEBI:15378"/>
        <dbReference type="ChEBI" id="CHEBI:29999"/>
        <dbReference type="ChEBI" id="CHEBI:30616"/>
        <dbReference type="ChEBI" id="CHEBI:83421"/>
        <dbReference type="ChEBI" id="CHEBI:456216"/>
        <dbReference type="EC" id="2.7.11.26"/>
    </reaction>
</comment>
<comment type="catalytic activity">
    <reaction evidence="2">
        <text>L-threonyl-[tau protein] + ATP = O-phospho-L-threonyl-[tau protein] + ADP + H(+)</text>
        <dbReference type="Rhea" id="RHEA:53904"/>
        <dbReference type="Rhea" id="RHEA-COMP:13703"/>
        <dbReference type="Rhea" id="RHEA-COMP:13704"/>
        <dbReference type="ChEBI" id="CHEBI:15378"/>
        <dbReference type="ChEBI" id="CHEBI:30013"/>
        <dbReference type="ChEBI" id="CHEBI:30616"/>
        <dbReference type="ChEBI" id="CHEBI:61977"/>
        <dbReference type="ChEBI" id="CHEBI:456216"/>
        <dbReference type="EC" id="2.7.11.26"/>
    </reaction>
</comment>
<comment type="catalytic activity">
    <reaction evidence="18 21">
        <text>L-seryl-[protein] + ATP = O-phospho-L-seryl-[protein] + ADP + H(+)</text>
        <dbReference type="Rhea" id="RHEA:17989"/>
        <dbReference type="Rhea" id="RHEA-COMP:9863"/>
        <dbReference type="Rhea" id="RHEA-COMP:11604"/>
        <dbReference type="ChEBI" id="CHEBI:15378"/>
        <dbReference type="ChEBI" id="CHEBI:29999"/>
        <dbReference type="ChEBI" id="CHEBI:30616"/>
        <dbReference type="ChEBI" id="CHEBI:83421"/>
        <dbReference type="ChEBI" id="CHEBI:456216"/>
        <dbReference type="EC" id="2.7.11.1"/>
    </reaction>
</comment>
<comment type="catalytic activity">
    <reaction evidence="20">
        <text>L-threonyl-[protein] + ATP = O-phospho-L-threonyl-[protein] + ADP + H(+)</text>
        <dbReference type="Rhea" id="RHEA:46608"/>
        <dbReference type="Rhea" id="RHEA-COMP:11060"/>
        <dbReference type="Rhea" id="RHEA-COMP:11605"/>
        <dbReference type="ChEBI" id="CHEBI:15378"/>
        <dbReference type="ChEBI" id="CHEBI:30013"/>
        <dbReference type="ChEBI" id="CHEBI:30616"/>
        <dbReference type="ChEBI" id="CHEBI:61977"/>
        <dbReference type="ChEBI" id="CHEBI:456216"/>
        <dbReference type="EC" id="2.7.11.1"/>
    </reaction>
</comment>
<comment type="activity regulation">
    <text evidence="2 21">Activated by phosphorylation at Tyr-216. In response to insulin, inhibited by phosphorylation at Ser-9 by PKB/AKT1 and RPS6KA3; phosphorylation at this site causes a conformational change, preventing access of substrates to the active site (By similarity). Inhibited by IL22 treatment which also triggers phosphorylation at Ser-9, promoting inactivation (PubMed:24742671). Inhibited by lithium (By similarity).</text>
</comment>
<comment type="subunit">
    <text evidence="2 8 12 13 14 24 26 28">Monomer (By similarity). Interacts with DAB2IP (via C2 domain); the interaction stimulates GSK3B kinase activation (By similarity). Interacts (via C2 domain) with PPP2CA (By similarity). Interacts with CABYR, MMP2, MUC1, NIN and PRUNE1 (By similarity). Interacts with AXIN1; the interaction mediates hyperphosphorylation of CTNNB1 leading to its ubiquitination and destruction (PubMed:19141611). Interacts with and phosphorylates SNAI1 (By similarity). Interacts with DNM1L (via a C-terminal domain) (By similarity). Interacts with ARRB2 (PubMed:16051150). Interacts with DISC1 (PubMed:19303846). Found in a complex composed of MACF1, APC, AXIN1, CTNNB1 and GSK3B (By similarity). Interacts with SGK3 (By similarity). Interacts with the CLOCK-BMAL1 heterodimer (By similarity). Interacts with ZBED3 (PubMed:19141611). Interacts with the BMAL1 (PubMed:20049328, PubMed:28903391). The complex composed, at least, of APC, CTNNB1 and GSK3B interacts with JPT1; the interaction requires the inactive form of GSK3B (phosphorylated at 'Ser-9') (By similarity). Forms a complex composed of PRKAR2A or PRKAR2B, GSK3B and GSKIP through GSKIP interaction; facilitates PKA-induced phosphorylation and regulates GSK3B activity (By similarity). Interacts with GSKIP (By similarity). Interacts with GID8 (By similarity). Interacts with PIWIL2 (PubMed:28903391). Interacts with LMBR1L (PubMed:31073040). Interacts with DDX3X (By similarity). Interacts with BIRC2 (By similarity). Interacts with TNFRSF10B; TNFRSF10B stimulation inhibits GSK3B kinase activity (By similarity). Found in a complex with SLC39A6, SLC39A10 and with GSK3B that controls NCAM1 phosphorylation (PubMed:28098160). Interacts with PKP3 (via ARM repeats); the interaction may be involved in PKP3 protein degradation (By similarity).</text>
</comment>
<comment type="interaction">
    <interactant intactId="EBI-400793">
        <id>Q9WV60</id>
    </interactant>
    <interactant intactId="EBI-397872">
        <id>Q02248</id>
        <label>Ctnnb1</label>
    </interactant>
    <organismsDiffer>false</organismsDiffer>
    <experiments>2</experiments>
</comment>
<comment type="interaction">
    <interactant intactId="EBI-400793">
        <id>Q9WV60</id>
    </interactant>
    <interactant intactId="EBI-1040928">
        <id>Q9WUA5</id>
        <label>Epm2a</label>
    </interactant>
    <organismsDiffer>false</organismsDiffer>
    <experiments>2</experiments>
</comment>
<comment type="subcellular location">
    <subcellularLocation>
        <location evidence="2">Cytoplasm</location>
    </subcellularLocation>
    <subcellularLocation>
        <location evidence="2">Nucleus</location>
    </subcellularLocation>
    <subcellularLocation>
        <location evidence="2">Cell membrane</location>
    </subcellularLocation>
    <text evidence="2">The phosphorylated form shows localization to cytoplasm and cell membrane. The MEMO1-RHOA-DIAPH1 signaling pathway controls localization of the phosphorylated form to the cell membrane (By similarity).</text>
</comment>
<comment type="tissue specificity">
    <text evidence="23">Expressed in the liver (at protein level).</text>
</comment>
<comment type="PTM">
    <text evidence="2 17 19 25">Phosphorylated by AKT1 and ILK1. Upon insulin-mediated signaling, the activated PKB/AKT1 protein kinase phosphorylates and deactivates GSK3B, resulting in the dephosphorylation and activation of GYS1. Activated by phosphorylation at Tyr-216. Phosphorylation of Ser-9 in the hippocampus peaks at CT0, whereas in the liver it peaks at CT12. Inactivated by phosphorylation at Ser-9 (By similarity). Phosphorylated in a circadian manner in the hippocampus (PubMed:28556462).</text>
</comment>
<comment type="PTM">
    <text evidence="2">Mono-ADP-ribosylation by PARP10 negatively regulates kinase activity.</text>
</comment>
<comment type="PTM">
    <text evidence="2">Palmitoylated. Palmitoylation by ZDHHC4 prevents AKT1-mediated phosphorylation.</text>
</comment>
<comment type="disruption phenotype">
    <text evidence="6">Embryonic lethality at 16 dpc due to hepatocyte apoptosis.</text>
</comment>
<comment type="similarity">
    <text evidence="29">Belongs to the protein kinase superfamily. CMGC Ser/Thr protein kinase family. GSK-3 subfamily.</text>
</comment>